<organism>
    <name type="scientific">Streptococcus pneumoniae serotype 19F (strain G54)</name>
    <dbReference type="NCBI Taxonomy" id="512566"/>
    <lineage>
        <taxon>Bacteria</taxon>
        <taxon>Bacillati</taxon>
        <taxon>Bacillota</taxon>
        <taxon>Bacilli</taxon>
        <taxon>Lactobacillales</taxon>
        <taxon>Streptococcaceae</taxon>
        <taxon>Streptococcus</taxon>
    </lineage>
</organism>
<keyword id="KW-0067">ATP-binding</keyword>
<keyword id="KW-0963">Cytoplasm</keyword>
<keyword id="KW-0418">Kinase</keyword>
<keyword id="KW-0547">Nucleotide-binding</keyword>
<keyword id="KW-0808">Transferase</keyword>
<sequence>MQNRPIIIGVTGGSGGGKTSVSRAILSHFPDEKISMIEHDSYYKDQSHLTFEERVKTNYDHPFAFDTDLMIEQIKELLAGRPVDIPTYDYTEHTRSSKTYRQEPQDVFIVEGILVLEDKRLRDLMDIKIFVDTDDXVRIXRXIKRXMEXXGRSLDSVINQYLGVVKPMYHQFIESTKRYADIVIPEGVSNTVAIDLLTTKIAKILEEARNSK</sequence>
<evidence type="ECO:0000255" key="1">
    <source>
        <dbReference type="HAMAP-Rule" id="MF_00551"/>
    </source>
</evidence>
<dbReference type="EC" id="2.7.1.48" evidence="1"/>
<dbReference type="EMBL" id="CP001015">
    <property type="protein sequence ID" value="ACF55248.1"/>
    <property type="molecule type" value="Genomic_DNA"/>
</dbReference>
<dbReference type="KEGG" id="spx:SPG_1102"/>
<dbReference type="HOGENOM" id="CLU_021278_1_2_9"/>
<dbReference type="UniPathway" id="UPA00574">
    <property type="reaction ID" value="UER00637"/>
</dbReference>
<dbReference type="UniPathway" id="UPA00579">
    <property type="reaction ID" value="UER00640"/>
</dbReference>
<dbReference type="GO" id="GO:0005737">
    <property type="term" value="C:cytoplasm"/>
    <property type="evidence" value="ECO:0007669"/>
    <property type="project" value="UniProtKB-SubCell"/>
</dbReference>
<dbReference type="GO" id="GO:0005524">
    <property type="term" value="F:ATP binding"/>
    <property type="evidence" value="ECO:0007669"/>
    <property type="project" value="UniProtKB-UniRule"/>
</dbReference>
<dbReference type="GO" id="GO:0043771">
    <property type="term" value="F:cytidine kinase activity"/>
    <property type="evidence" value="ECO:0007669"/>
    <property type="project" value="RHEA"/>
</dbReference>
<dbReference type="GO" id="GO:0004849">
    <property type="term" value="F:uridine kinase activity"/>
    <property type="evidence" value="ECO:0007669"/>
    <property type="project" value="UniProtKB-UniRule"/>
</dbReference>
<dbReference type="GO" id="GO:0044211">
    <property type="term" value="P:CTP salvage"/>
    <property type="evidence" value="ECO:0007669"/>
    <property type="project" value="UniProtKB-UniRule"/>
</dbReference>
<dbReference type="GO" id="GO:0044206">
    <property type="term" value="P:UMP salvage"/>
    <property type="evidence" value="ECO:0007669"/>
    <property type="project" value="UniProtKB-UniRule"/>
</dbReference>
<dbReference type="CDD" id="cd02023">
    <property type="entry name" value="UMPK"/>
    <property type="match status" value="1"/>
</dbReference>
<dbReference type="Gene3D" id="3.40.50.300">
    <property type="entry name" value="P-loop containing nucleotide triphosphate hydrolases"/>
    <property type="match status" value="1"/>
</dbReference>
<dbReference type="HAMAP" id="MF_00551">
    <property type="entry name" value="Uridine_kinase"/>
    <property type="match status" value="1"/>
</dbReference>
<dbReference type="InterPro" id="IPR027417">
    <property type="entry name" value="P-loop_NTPase"/>
</dbReference>
<dbReference type="InterPro" id="IPR006083">
    <property type="entry name" value="PRK/URK"/>
</dbReference>
<dbReference type="InterPro" id="IPR026008">
    <property type="entry name" value="Uridine_kinase"/>
</dbReference>
<dbReference type="InterPro" id="IPR000764">
    <property type="entry name" value="Uridine_kinase-like"/>
</dbReference>
<dbReference type="NCBIfam" id="NF004018">
    <property type="entry name" value="PRK05480.1"/>
    <property type="match status" value="1"/>
</dbReference>
<dbReference type="NCBIfam" id="TIGR00235">
    <property type="entry name" value="udk"/>
    <property type="match status" value="1"/>
</dbReference>
<dbReference type="PANTHER" id="PTHR10285">
    <property type="entry name" value="URIDINE KINASE"/>
    <property type="match status" value="1"/>
</dbReference>
<dbReference type="Pfam" id="PF00485">
    <property type="entry name" value="PRK"/>
    <property type="match status" value="1"/>
</dbReference>
<dbReference type="PRINTS" id="PR00988">
    <property type="entry name" value="URIDINKINASE"/>
</dbReference>
<dbReference type="SUPFAM" id="SSF52540">
    <property type="entry name" value="P-loop containing nucleoside triphosphate hydrolases"/>
    <property type="match status" value="1"/>
</dbReference>
<accession>B5E4U6</accession>
<feature type="chain" id="PRO_1000129091" description="Uridine kinase">
    <location>
        <begin position="1"/>
        <end position="212"/>
    </location>
</feature>
<feature type="binding site" evidence="1">
    <location>
        <begin position="12"/>
        <end position="19"/>
    </location>
    <ligand>
        <name>ATP</name>
        <dbReference type="ChEBI" id="CHEBI:30616"/>
    </ligand>
</feature>
<proteinExistence type="inferred from homology"/>
<reference key="1">
    <citation type="journal article" date="2001" name="Microb. Drug Resist.">
        <title>Annotated draft genomic sequence from a Streptococcus pneumoniae type 19F clinical isolate.</title>
        <authorList>
            <person name="Dopazo J."/>
            <person name="Mendoza A."/>
            <person name="Herrero J."/>
            <person name="Caldara F."/>
            <person name="Humbert Y."/>
            <person name="Friedli L."/>
            <person name="Guerrier M."/>
            <person name="Grand-Schenk E."/>
            <person name="Gandin C."/>
            <person name="de Francesco M."/>
            <person name="Polissi A."/>
            <person name="Buell G."/>
            <person name="Feger G."/>
            <person name="Garcia E."/>
            <person name="Peitsch M."/>
            <person name="Garcia-Bustos J.F."/>
        </authorList>
    </citation>
    <scope>NUCLEOTIDE SEQUENCE [LARGE SCALE GENOMIC DNA]</scope>
    <source>
        <strain>G54</strain>
    </source>
</reference>
<reference key="2">
    <citation type="submission" date="2008-03" db="EMBL/GenBank/DDBJ databases">
        <title>Pneumococcal beta glucoside metabolism investigated by whole genome comparison.</title>
        <authorList>
            <person name="Mulas L."/>
            <person name="Trappetti C."/>
            <person name="Hakenbeck R."/>
            <person name="Iannelli F."/>
            <person name="Pozzi G."/>
            <person name="Davidsen T.M."/>
            <person name="Tettelin H."/>
            <person name="Oggioni M."/>
        </authorList>
    </citation>
    <scope>NUCLEOTIDE SEQUENCE [LARGE SCALE GENOMIC DNA]</scope>
    <source>
        <strain>G54</strain>
    </source>
</reference>
<comment type="catalytic activity">
    <reaction evidence="1">
        <text>uridine + ATP = UMP + ADP + H(+)</text>
        <dbReference type="Rhea" id="RHEA:16825"/>
        <dbReference type="ChEBI" id="CHEBI:15378"/>
        <dbReference type="ChEBI" id="CHEBI:16704"/>
        <dbReference type="ChEBI" id="CHEBI:30616"/>
        <dbReference type="ChEBI" id="CHEBI:57865"/>
        <dbReference type="ChEBI" id="CHEBI:456216"/>
        <dbReference type="EC" id="2.7.1.48"/>
    </reaction>
</comment>
<comment type="catalytic activity">
    <reaction evidence="1">
        <text>cytidine + ATP = CMP + ADP + H(+)</text>
        <dbReference type="Rhea" id="RHEA:24674"/>
        <dbReference type="ChEBI" id="CHEBI:15378"/>
        <dbReference type="ChEBI" id="CHEBI:17562"/>
        <dbReference type="ChEBI" id="CHEBI:30616"/>
        <dbReference type="ChEBI" id="CHEBI:60377"/>
        <dbReference type="ChEBI" id="CHEBI:456216"/>
        <dbReference type="EC" id="2.7.1.48"/>
    </reaction>
</comment>
<comment type="pathway">
    <text evidence="1">Pyrimidine metabolism; CTP biosynthesis via salvage pathway; CTP from cytidine: step 1/3.</text>
</comment>
<comment type="pathway">
    <text evidence="1">Pyrimidine metabolism; UMP biosynthesis via salvage pathway; UMP from uridine: step 1/1.</text>
</comment>
<comment type="subcellular location">
    <subcellularLocation>
        <location evidence="1">Cytoplasm</location>
    </subcellularLocation>
</comment>
<comment type="similarity">
    <text evidence="1">Belongs to the uridine kinase family.</text>
</comment>
<gene>
    <name evidence="1" type="primary">udk</name>
    <name type="ordered locus">SPG_1102</name>
</gene>
<protein>
    <recommendedName>
        <fullName evidence="1">Uridine kinase</fullName>
        <ecNumber evidence="1">2.7.1.48</ecNumber>
    </recommendedName>
    <alternativeName>
        <fullName evidence="1">Cytidine monophosphokinase</fullName>
    </alternativeName>
    <alternativeName>
        <fullName evidence="1">Uridine monophosphokinase</fullName>
    </alternativeName>
</protein>
<name>URK_STRP4</name>